<dbReference type="EC" id="2.3.1.48" evidence="1"/>
<dbReference type="EMBL" id="U90274">
    <property type="protein sequence ID" value="AAC03423.2"/>
    <property type="molecule type" value="mRNA"/>
</dbReference>
<dbReference type="EMBL" id="AF171927">
    <property type="protein sequence ID" value="AAF06742.1"/>
    <property type="molecule type" value="Genomic_DNA"/>
</dbReference>
<dbReference type="EMBL" id="AY093417">
    <property type="protein sequence ID" value="AAM28228.1"/>
    <property type="molecule type" value="mRNA"/>
</dbReference>
<dbReference type="PIR" id="T02064">
    <property type="entry name" value="T02064"/>
</dbReference>
<dbReference type="RefSeq" id="NP_001105187.1">
    <property type="nucleotide sequence ID" value="NM_001111717.1"/>
</dbReference>
<dbReference type="RefSeq" id="XP_008651846.1">
    <property type="nucleotide sequence ID" value="XM_008653624.1"/>
</dbReference>
<dbReference type="SMR" id="Q8LPU4"/>
<dbReference type="FunCoup" id="Q8LPU4">
    <property type="interactions" value="3261"/>
</dbReference>
<dbReference type="STRING" id="4577.Q8LPU4"/>
<dbReference type="PaxDb" id="4577-GRMZM5G851405_P02"/>
<dbReference type="GeneID" id="542083"/>
<dbReference type="KEGG" id="zma:542083"/>
<dbReference type="MaizeGDB" id="273678"/>
<dbReference type="eggNOG" id="KOG2696">
    <property type="taxonomic scope" value="Eukaryota"/>
</dbReference>
<dbReference type="InParanoid" id="Q8LPU4"/>
<dbReference type="OrthoDB" id="10253098at2759"/>
<dbReference type="BRENDA" id="2.3.1.48">
    <property type="organism ID" value="6752"/>
</dbReference>
<dbReference type="Proteomes" id="UP000007305">
    <property type="component" value="Unplaced"/>
</dbReference>
<dbReference type="ExpressionAtlas" id="Q8LPU4">
    <property type="expression patterns" value="baseline and differential"/>
</dbReference>
<dbReference type="GO" id="GO:0000781">
    <property type="term" value="C:chromosome, telomeric region"/>
    <property type="evidence" value="ECO:0007669"/>
    <property type="project" value="GOC"/>
</dbReference>
<dbReference type="GO" id="GO:0005737">
    <property type="term" value="C:cytoplasm"/>
    <property type="evidence" value="ECO:0007669"/>
    <property type="project" value="UniProtKB-SubCell"/>
</dbReference>
<dbReference type="GO" id="GO:0005634">
    <property type="term" value="C:nucleus"/>
    <property type="evidence" value="ECO:0007669"/>
    <property type="project" value="UniProtKB-SubCell"/>
</dbReference>
<dbReference type="GO" id="GO:0010485">
    <property type="term" value="F:histone H4 acetyltransferase activity"/>
    <property type="evidence" value="ECO:0000318"/>
    <property type="project" value="GO_Central"/>
</dbReference>
<dbReference type="GO" id="GO:0031509">
    <property type="term" value="P:subtelomeric heterochromatin formation"/>
    <property type="evidence" value="ECO:0007669"/>
    <property type="project" value="InterPro"/>
</dbReference>
<dbReference type="FunFam" id="3.40.630.30:FF:000077">
    <property type="entry name" value="Histone acetyltransferase type B catalytic subunit"/>
    <property type="match status" value="1"/>
</dbReference>
<dbReference type="FunFam" id="3.90.360.10:FF:000002">
    <property type="entry name" value="Histone acetyltransferase type B catalytic subunit"/>
    <property type="match status" value="1"/>
</dbReference>
<dbReference type="Gene3D" id="3.40.630.30">
    <property type="match status" value="1"/>
</dbReference>
<dbReference type="Gene3D" id="3.90.360.10">
    <property type="entry name" value="Histone acetyl transferase 1 (HAT1), N-terminal domain"/>
    <property type="match status" value="1"/>
</dbReference>
<dbReference type="InterPro" id="IPR016181">
    <property type="entry name" value="Acyl_CoA_acyltransferase"/>
</dbReference>
<dbReference type="InterPro" id="IPR019467">
    <property type="entry name" value="Hat1_N"/>
</dbReference>
<dbReference type="InterPro" id="IPR037113">
    <property type="entry name" value="Hat1_N_sf"/>
</dbReference>
<dbReference type="InterPro" id="IPR017380">
    <property type="entry name" value="Hist_AcTrfase_B-typ_cat-su"/>
</dbReference>
<dbReference type="PANTHER" id="PTHR12046">
    <property type="entry name" value="HISTONE ACETYLTRANSFERASE TYPE B CATALYTIC SUBUNIT"/>
    <property type="match status" value="1"/>
</dbReference>
<dbReference type="Pfam" id="PF10394">
    <property type="entry name" value="Hat1_N"/>
    <property type="match status" value="1"/>
</dbReference>
<dbReference type="PIRSF" id="PIRSF038084">
    <property type="entry name" value="HAT-B_cat"/>
    <property type="match status" value="1"/>
</dbReference>
<dbReference type="SUPFAM" id="SSF55729">
    <property type="entry name" value="Acyl-CoA N-acyltransferases (Nat)"/>
    <property type="match status" value="1"/>
</dbReference>
<sequence>MALKQKDTDAAATATGTKKRRRVFFSDTDAGVEANECMKVFLVWNPGEVSSVDCTAIQPFDLNHFFGEDGKIYGYKNLKINVWISAKSFHGYADVSFDETSDGGKGITDLKPVLQNIFGENLVEKEEFLHTFSKECEYIRTAVTNGSAIKHDGSYESDPAVEIVRVELQGAAAFLYSRLVPLVLLLVEGSTPIDIGEHGWEMLLVVKKATQEAGSKFELLGFAAVHNFYHYPESIRLRISQILVLPPYQGEGHGLGLLEAINYIAQSENIYDVTIESPSDYLQYVRSSIDCLRLLMFDPIKPALGAIVLSLKETNLSKRAQSLRMVPPADLMETVRQKLKINKKQFLRCWEILVFLSLDSQDHKSMDNFRACIYDRMKGEILGSASGTNRKRLLQMPTSFNKEASFAVYWTQEIEDEDEQTVEQQPEDLKTQEQQLNELVDIQIEEIAGVAKNVTSRCKDKMTELVVQ</sequence>
<organism>
    <name type="scientific">Zea mays</name>
    <name type="common">Maize</name>
    <dbReference type="NCBI Taxonomy" id="4577"/>
    <lineage>
        <taxon>Eukaryota</taxon>
        <taxon>Viridiplantae</taxon>
        <taxon>Streptophyta</taxon>
        <taxon>Embryophyta</taxon>
        <taxon>Tracheophyta</taxon>
        <taxon>Spermatophyta</taxon>
        <taxon>Magnoliopsida</taxon>
        <taxon>Liliopsida</taxon>
        <taxon>Poales</taxon>
        <taxon>Poaceae</taxon>
        <taxon>PACMAD clade</taxon>
        <taxon>Panicoideae</taxon>
        <taxon>Andropogonodae</taxon>
        <taxon>Andropogoneae</taxon>
        <taxon>Tripsacinae</taxon>
        <taxon>Zea</taxon>
    </lineage>
</organism>
<protein>
    <recommendedName>
        <fullName>Histone acetyltransferase type B catalytic subunit</fullName>
        <ecNumber evidence="1">2.3.1.48</ecNumber>
    </recommendedName>
    <alternativeName>
        <fullName>Histone acetyltransferase HAT B</fullName>
    </alternativeName>
    <alternativeName>
        <fullName>Histone acetyltransferase HAT-B-p50</fullName>
    </alternativeName>
</protein>
<comment type="function">
    <text>Acetylates newly synthesized histones during DNA replication. Highly specific in vitro for the non-acetylated H4 which is acetylated sequentially at 'Lys-12' and 'Lys-5' into a di-acetylated form.</text>
</comment>
<comment type="catalytic activity">
    <reaction evidence="1">
        <text>L-lysyl-[protein] + acetyl-CoA = N(6)-acetyl-L-lysyl-[protein] + CoA + H(+)</text>
        <dbReference type="Rhea" id="RHEA:45948"/>
        <dbReference type="Rhea" id="RHEA-COMP:9752"/>
        <dbReference type="Rhea" id="RHEA-COMP:10731"/>
        <dbReference type="ChEBI" id="CHEBI:15378"/>
        <dbReference type="ChEBI" id="CHEBI:29969"/>
        <dbReference type="ChEBI" id="CHEBI:57287"/>
        <dbReference type="ChEBI" id="CHEBI:57288"/>
        <dbReference type="ChEBI" id="CHEBI:61930"/>
        <dbReference type="EC" id="2.3.1.48"/>
    </reaction>
</comment>
<comment type="activity regulation">
    <text>Inhibited by 5 mM of zinc, copper and iron. Unaffected by low concentrations of detergents and irreversibly inactivated by 2% ethanol, isopropanol or dimethyl sulfoxide.</text>
</comment>
<comment type="biophysicochemical properties">
    <kinetics>
        <KM evidence="3">25 uM for core histones</KM>
        <KM evidence="3">9 uM for acetyl-CoA</KM>
    </kinetics>
    <phDependence>
        <text evidence="3">Optimum pH is 8.2-8.5.</text>
    </phDependence>
    <temperatureDependence>
        <text evidence="3">Optimum temperature is 37 degrees Celsius.</text>
    </temperatureDependence>
</comment>
<comment type="subunit">
    <text evidence="2">Heteromer of HAT1/p50 and p45 subunits.</text>
</comment>
<comment type="subcellular location">
    <subcellularLocation>
        <location evidence="2">Nucleus</location>
    </subcellularLocation>
    <subcellularLocation>
        <location evidence="2">Cytoplasm</location>
    </subcellularLocation>
</comment>
<comment type="developmental stage">
    <text evidence="2">Found in the dry embryo (at protein level). Maximum level of expression 22 hours after start of seed imbibition.</text>
</comment>
<comment type="similarity">
    <text evidence="4">Belongs to the HAT1 family.</text>
</comment>
<evidence type="ECO:0000250" key="1">
    <source>
        <dbReference type="UniProtKB" id="O14929"/>
    </source>
</evidence>
<evidence type="ECO:0000269" key="2">
    <source>
    </source>
</evidence>
<evidence type="ECO:0000269" key="3">
    <source>
    </source>
</evidence>
<evidence type="ECO:0000305" key="4"/>
<reference key="1">
    <citation type="journal article" date="1999" name="Nucleic Acids Res.">
        <title>Analysis of the histone acetyltransferase B complex of maize embryos.</title>
        <authorList>
            <person name="Lusser A."/>
            <person name="Eberharter A."/>
            <person name="Loidl A."/>
            <person name="Goralik-Schramel M."/>
            <person name="Horngacher M."/>
            <person name="Hass H."/>
            <person name="Loidl P."/>
        </authorList>
    </citation>
    <scope>NUCLEOTIDE SEQUENCE [GENOMIC DNA / MRNA]</scope>
    <scope>INTERACTION WITH P45</scope>
    <scope>DEVELOPMENTAL STAGE</scope>
    <scope>SUBCELLULAR LOCATION</scope>
    <source>
        <strain>cv. Cuzco 251</strain>
    </source>
</reference>
<reference key="2">
    <citation type="submission" date="2002-05" db="EMBL/GenBank/DDBJ databases">
        <title>Sequences from the plant chromatin consortium.</title>
        <authorList>
            <person name="Chandler V.L."/>
            <person name="Kaeppler S.M."/>
            <person name="Kaeppler H.F."/>
            <person name="Cone K.C."/>
        </authorList>
    </citation>
    <scope>NUCLEOTIDE SEQUENCE [MRNA]</scope>
    <source>
        <strain>cv. B73</strain>
    </source>
</reference>
<reference key="3">
    <citation type="journal article" date="1996" name="FEBS Lett.">
        <title>Purification and characterization of the cytoplasmic histone acetyltransferase B of maize embryos.</title>
        <authorList>
            <person name="Eberharter A."/>
            <person name="Lechner T."/>
            <person name="Goralik-Schramel M."/>
            <person name="Loidl P."/>
        </authorList>
    </citation>
    <scope>CHARACTERIZATION</scope>
    <scope>BIOPHYSICOCHEMICAL PROPERTIES</scope>
</reference>
<reference key="4">
    <citation type="journal article" date="1998" name="FEBS Lett.">
        <title>Substrate and sequential site specificity of cytoplasmic histone acetyltransferases of maize and rat liver.</title>
        <authorList>
            <person name="Koelle D."/>
            <person name="Sarg B."/>
            <person name="Lindner H."/>
            <person name="Loidl P."/>
        </authorList>
    </citation>
    <scope>SUBSTRATE SPECIFICITY</scope>
</reference>
<gene>
    <name type="primary">HAT1</name>
    <name type="synonym">HAC106</name>
    <name type="synonym">HATB1</name>
</gene>
<accession>Q8LPU4</accession>
<accession>O49994</accession>
<name>HAT1_MAIZE</name>
<keyword id="KW-0012">Acyltransferase</keyword>
<keyword id="KW-0963">Cytoplasm</keyword>
<keyword id="KW-0539">Nucleus</keyword>
<keyword id="KW-1185">Reference proteome</keyword>
<keyword id="KW-0808">Transferase</keyword>
<proteinExistence type="evidence at protein level"/>
<feature type="chain" id="PRO_0000232126" description="Histone acetyltransferase type B catalytic subunit">
    <location>
        <begin position="1"/>
        <end position="468"/>
    </location>
</feature>
<feature type="active site" description="Proton donor/acceptor" evidence="1">
    <location>
        <position position="276"/>
    </location>
</feature>
<feature type="binding site" evidence="1">
    <location>
        <begin position="242"/>
        <end position="244"/>
    </location>
    <ligand>
        <name>acetyl-CoA</name>
        <dbReference type="ChEBI" id="CHEBI:57288"/>
    </ligand>
</feature>
<feature type="binding site" evidence="1">
    <location>
        <begin position="249"/>
        <end position="255"/>
    </location>
    <ligand>
        <name>acetyl-CoA</name>
        <dbReference type="ChEBI" id="CHEBI:57288"/>
    </ligand>
</feature>
<feature type="site" description="Interaction with histone H4 N-terminus" evidence="1">
    <location>
        <position position="200"/>
    </location>
</feature>
<feature type="sequence conflict" description="In Ref. 2; AAM28228." evidence="4" ref="2">
    <original>V</original>
    <variation>I</variation>
    <location>
        <position position="354"/>
    </location>
</feature>